<protein>
    <recommendedName>
        <fullName evidence="1">Dual-action ribosomal maturation protein DarP</fullName>
    </recommendedName>
    <alternativeName>
        <fullName evidence="1">Large ribosomal subunit assembly factor DarP</fullName>
    </alternativeName>
</protein>
<organism>
    <name type="scientific">Escherichia coli O45:K1 (strain S88 / ExPEC)</name>
    <dbReference type="NCBI Taxonomy" id="585035"/>
    <lineage>
        <taxon>Bacteria</taxon>
        <taxon>Pseudomonadati</taxon>
        <taxon>Pseudomonadota</taxon>
        <taxon>Gammaproteobacteria</taxon>
        <taxon>Enterobacterales</taxon>
        <taxon>Enterobacteriaceae</taxon>
        <taxon>Escherichia</taxon>
    </lineage>
</organism>
<feature type="chain" id="PRO_1000198383" description="Dual-action ribosomal maturation protein DarP">
    <location>
        <begin position="1"/>
        <end position="183"/>
    </location>
</feature>
<comment type="function">
    <text evidence="1">Member of a network of 50S ribosomal subunit biogenesis factors which assembles along the 30S-50S interface, preventing incorrect 23S rRNA structures from forming. Promotes peptidyl transferase center (PTC) maturation.</text>
</comment>
<comment type="subcellular location">
    <subcellularLocation>
        <location evidence="1">Cytoplasm</location>
    </subcellularLocation>
    <text evidence="1">Associates with late stage pre-50S ribosomal subunits.</text>
</comment>
<comment type="similarity">
    <text evidence="1">Belongs to the DarP family.</text>
</comment>
<accession>B7MLP2</accession>
<sequence length="183" mass="21359">MTKQPEDWLDDVPGDDIEDEDDEIIWVSKSEIKRDAEELKRLGAEIVDLGKNALDKIPLDADLRAAIELAQRIKMEGRRRQLQLIGKMLRQRDVEPIRQALDKLKNRHNQQVVLFHKLENLRDRLIDQGDDAIAEVLNLWPDADRQQLRTLIRNAKKEKEGNKPPKSARQIFQYLRELAENEG</sequence>
<name>DARP_ECO45</name>
<dbReference type="EMBL" id="CU928161">
    <property type="protein sequence ID" value="CAR05972.1"/>
    <property type="molecule type" value="Genomic_DNA"/>
</dbReference>
<dbReference type="SMR" id="B7MLP2"/>
<dbReference type="KEGG" id="ecz:ECS88_4824"/>
<dbReference type="HOGENOM" id="CLU_106757_2_0_6"/>
<dbReference type="Proteomes" id="UP000000747">
    <property type="component" value="Chromosome"/>
</dbReference>
<dbReference type="GO" id="GO:0005829">
    <property type="term" value="C:cytosol"/>
    <property type="evidence" value="ECO:0007669"/>
    <property type="project" value="TreeGrafter"/>
</dbReference>
<dbReference type="GO" id="GO:0043022">
    <property type="term" value="F:ribosome binding"/>
    <property type="evidence" value="ECO:0007669"/>
    <property type="project" value="UniProtKB-UniRule"/>
</dbReference>
<dbReference type="GO" id="GO:0019843">
    <property type="term" value="F:rRNA binding"/>
    <property type="evidence" value="ECO:0007669"/>
    <property type="project" value="UniProtKB-UniRule"/>
</dbReference>
<dbReference type="GO" id="GO:1902626">
    <property type="term" value="P:assembly of large subunit precursor of preribosome"/>
    <property type="evidence" value="ECO:0007669"/>
    <property type="project" value="UniProtKB-UniRule"/>
</dbReference>
<dbReference type="CDD" id="cd16331">
    <property type="entry name" value="YjgA-like"/>
    <property type="match status" value="1"/>
</dbReference>
<dbReference type="FunFam" id="1.10.60.30:FF:000001">
    <property type="entry name" value="UPF0307 protein YjgA"/>
    <property type="match status" value="1"/>
</dbReference>
<dbReference type="FunFam" id="1.10.60.30:FF:000002">
    <property type="entry name" value="UPF0307 protein YjgA"/>
    <property type="match status" value="1"/>
</dbReference>
<dbReference type="Gene3D" id="1.10.60.30">
    <property type="entry name" value="PSPTO4464-like domains"/>
    <property type="match status" value="2"/>
</dbReference>
<dbReference type="HAMAP" id="MF_00765">
    <property type="entry name" value="DarP"/>
    <property type="match status" value="1"/>
</dbReference>
<dbReference type="InterPro" id="IPR006839">
    <property type="entry name" value="DarP"/>
</dbReference>
<dbReference type="InterPro" id="IPR023153">
    <property type="entry name" value="DarP_sf"/>
</dbReference>
<dbReference type="NCBIfam" id="NF003593">
    <property type="entry name" value="PRK05255.1-1"/>
    <property type="match status" value="1"/>
</dbReference>
<dbReference type="PANTHER" id="PTHR38101">
    <property type="entry name" value="UPF0307 PROTEIN YJGA"/>
    <property type="match status" value="1"/>
</dbReference>
<dbReference type="PANTHER" id="PTHR38101:SF1">
    <property type="entry name" value="UPF0307 PROTEIN YJGA"/>
    <property type="match status" value="1"/>
</dbReference>
<dbReference type="Pfam" id="PF04751">
    <property type="entry name" value="DarP"/>
    <property type="match status" value="1"/>
</dbReference>
<dbReference type="PIRSF" id="PIRSF016183">
    <property type="entry name" value="UCP016183"/>
    <property type="match status" value="1"/>
</dbReference>
<dbReference type="SUPFAM" id="SSF158710">
    <property type="entry name" value="PSPTO4464-like"/>
    <property type="match status" value="1"/>
</dbReference>
<evidence type="ECO:0000255" key="1">
    <source>
        <dbReference type="HAMAP-Rule" id="MF_00765"/>
    </source>
</evidence>
<gene>
    <name evidence="1" type="primary">darP</name>
    <name type="ordered locus">ECS88_4824</name>
</gene>
<proteinExistence type="inferred from homology"/>
<keyword id="KW-0963">Cytoplasm</keyword>
<keyword id="KW-1185">Reference proteome</keyword>
<keyword id="KW-0690">Ribosome biogenesis</keyword>
<keyword id="KW-0694">RNA-binding</keyword>
<keyword id="KW-0699">rRNA-binding</keyword>
<reference key="1">
    <citation type="journal article" date="2009" name="PLoS Genet.">
        <title>Organised genome dynamics in the Escherichia coli species results in highly diverse adaptive paths.</title>
        <authorList>
            <person name="Touchon M."/>
            <person name="Hoede C."/>
            <person name="Tenaillon O."/>
            <person name="Barbe V."/>
            <person name="Baeriswyl S."/>
            <person name="Bidet P."/>
            <person name="Bingen E."/>
            <person name="Bonacorsi S."/>
            <person name="Bouchier C."/>
            <person name="Bouvet O."/>
            <person name="Calteau A."/>
            <person name="Chiapello H."/>
            <person name="Clermont O."/>
            <person name="Cruveiller S."/>
            <person name="Danchin A."/>
            <person name="Diard M."/>
            <person name="Dossat C."/>
            <person name="Karoui M.E."/>
            <person name="Frapy E."/>
            <person name="Garry L."/>
            <person name="Ghigo J.M."/>
            <person name="Gilles A.M."/>
            <person name="Johnson J."/>
            <person name="Le Bouguenec C."/>
            <person name="Lescat M."/>
            <person name="Mangenot S."/>
            <person name="Martinez-Jehanne V."/>
            <person name="Matic I."/>
            <person name="Nassif X."/>
            <person name="Oztas S."/>
            <person name="Petit M.A."/>
            <person name="Pichon C."/>
            <person name="Rouy Z."/>
            <person name="Ruf C.S."/>
            <person name="Schneider D."/>
            <person name="Tourret J."/>
            <person name="Vacherie B."/>
            <person name="Vallenet D."/>
            <person name="Medigue C."/>
            <person name="Rocha E.P.C."/>
            <person name="Denamur E."/>
        </authorList>
    </citation>
    <scope>NUCLEOTIDE SEQUENCE [LARGE SCALE GENOMIC DNA]</scope>
    <source>
        <strain>S88 / ExPEC</strain>
    </source>
</reference>